<accession>P9WH94</accession>
<accession>L0T7B1</accession>
<accession>P0A5W2</accession>
<accession>P96925</accession>
<evidence type="ECO:0000255" key="1">
    <source>
        <dbReference type="HAMAP-Rule" id="MF_00294"/>
    </source>
</evidence>
<evidence type="ECO:0000305" key="2"/>
<dbReference type="EMBL" id="AE000516">
    <property type="protein sequence ID" value="AAK44888.1"/>
    <property type="molecule type" value="Genomic_DNA"/>
</dbReference>
<dbReference type="SMR" id="P9WH94"/>
<dbReference type="KEGG" id="mtc:MT0663"/>
<dbReference type="PATRIC" id="fig|83331.31.peg.705"/>
<dbReference type="HOGENOM" id="CLU_190949_0_2_11"/>
<dbReference type="Proteomes" id="UP000001020">
    <property type="component" value="Chromosome"/>
</dbReference>
<dbReference type="GO" id="GO:0005737">
    <property type="term" value="C:cytoplasm"/>
    <property type="evidence" value="ECO:0007669"/>
    <property type="project" value="UniProtKB-ARBA"/>
</dbReference>
<dbReference type="GO" id="GO:1990904">
    <property type="term" value="C:ribonucleoprotein complex"/>
    <property type="evidence" value="ECO:0007669"/>
    <property type="project" value="UniProtKB-KW"/>
</dbReference>
<dbReference type="GO" id="GO:0005840">
    <property type="term" value="C:ribosome"/>
    <property type="evidence" value="ECO:0007669"/>
    <property type="project" value="UniProtKB-KW"/>
</dbReference>
<dbReference type="GO" id="GO:0003735">
    <property type="term" value="F:structural constituent of ribosome"/>
    <property type="evidence" value="ECO:0007669"/>
    <property type="project" value="InterPro"/>
</dbReference>
<dbReference type="GO" id="GO:0006412">
    <property type="term" value="P:translation"/>
    <property type="evidence" value="ECO:0007669"/>
    <property type="project" value="UniProtKB-UniRule"/>
</dbReference>
<dbReference type="Gene3D" id="2.20.28.120">
    <property type="entry name" value="Ribosomal protein L33"/>
    <property type="match status" value="1"/>
</dbReference>
<dbReference type="HAMAP" id="MF_00294">
    <property type="entry name" value="Ribosomal_bL33"/>
    <property type="match status" value="1"/>
</dbReference>
<dbReference type="InterPro" id="IPR001705">
    <property type="entry name" value="Ribosomal_bL33"/>
</dbReference>
<dbReference type="InterPro" id="IPR018264">
    <property type="entry name" value="Ribosomal_bL33_CS"/>
</dbReference>
<dbReference type="InterPro" id="IPR038584">
    <property type="entry name" value="Ribosomal_bL33_sf"/>
</dbReference>
<dbReference type="InterPro" id="IPR011332">
    <property type="entry name" value="Ribosomal_zn-bd"/>
</dbReference>
<dbReference type="NCBIfam" id="NF001764">
    <property type="entry name" value="PRK00504.1"/>
    <property type="match status" value="1"/>
</dbReference>
<dbReference type="NCBIfam" id="NF001860">
    <property type="entry name" value="PRK00595.1"/>
    <property type="match status" value="1"/>
</dbReference>
<dbReference type="NCBIfam" id="TIGR01023">
    <property type="entry name" value="rpmG_bact"/>
    <property type="match status" value="1"/>
</dbReference>
<dbReference type="PANTHER" id="PTHR43168">
    <property type="entry name" value="50S RIBOSOMAL PROTEIN L33, CHLOROPLASTIC"/>
    <property type="match status" value="1"/>
</dbReference>
<dbReference type="PANTHER" id="PTHR43168:SF2">
    <property type="entry name" value="LARGE RIBOSOMAL SUBUNIT PROTEIN BL33C"/>
    <property type="match status" value="1"/>
</dbReference>
<dbReference type="Pfam" id="PF00471">
    <property type="entry name" value="Ribosomal_L33"/>
    <property type="match status" value="1"/>
</dbReference>
<dbReference type="SUPFAM" id="SSF57829">
    <property type="entry name" value="Zn-binding ribosomal proteins"/>
    <property type="match status" value="1"/>
</dbReference>
<dbReference type="PROSITE" id="PS00582">
    <property type="entry name" value="RIBOSOMAL_L33"/>
    <property type="match status" value="1"/>
</dbReference>
<feature type="chain" id="PRO_0000428226" description="Large ribosomal subunit protein bL33B">
    <location>
        <begin position="1"/>
        <end position="55"/>
    </location>
</feature>
<sequence>MASSTDVRPKITLACEVCKHRNYITKKNRRNDPDRLELKKFCPNCGKHQAHRETR</sequence>
<comment type="similarity">
    <text evidence="2">Belongs to the bacterial ribosomal protein bL33 family.</text>
</comment>
<protein>
    <recommendedName>
        <fullName evidence="1">Large ribosomal subunit protein bL33B</fullName>
    </recommendedName>
    <alternativeName>
        <fullName>50S ribosomal protein L33 2</fullName>
    </alternativeName>
</protein>
<keyword id="KW-1185">Reference proteome</keyword>
<keyword id="KW-0687">Ribonucleoprotein</keyword>
<keyword id="KW-0689">Ribosomal protein</keyword>
<gene>
    <name type="primary">rpmG2</name>
    <name type="ordered locus">MT0663</name>
</gene>
<reference key="1">
    <citation type="journal article" date="2002" name="J. Bacteriol.">
        <title>Whole-genome comparison of Mycobacterium tuberculosis clinical and laboratory strains.</title>
        <authorList>
            <person name="Fleischmann R.D."/>
            <person name="Alland D."/>
            <person name="Eisen J.A."/>
            <person name="Carpenter L."/>
            <person name="White O."/>
            <person name="Peterson J.D."/>
            <person name="DeBoy R.T."/>
            <person name="Dodson R.J."/>
            <person name="Gwinn M.L."/>
            <person name="Haft D.H."/>
            <person name="Hickey E.K."/>
            <person name="Kolonay J.F."/>
            <person name="Nelson W.C."/>
            <person name="Umayam L.A."/>
            <person name="Ermolaeva M.D."/>
            <person name="Salzberg S.L."/>
            <person name="Delcher A."/>
            <person name="Utterback T.R."/>
            <person name="Weidman J.F."/>
            <person name="Khouri H.M."/>
            <person name="Gill J."/>
            <person name="Mikula A."/>
            <person name="Bishai W."/>
            <person name="Jacobs W.R. Jr."/>
            <person name="Venter J.C."/>
            <person name="Fraser C.M."/>
        </authorList>
    </citation>
    <scope>NUCLEOTIDE SEQUENCE [LARGE SCALE GENOMIC DNA]</scope>
    <source>
        <strain>CDC 1551 / Oshkosh</strain>
    </source>
</reference>
<proteinExistence type="inferred from homology"/>
<name>RL332_MYCTO</name>
<organism>
    <name type="scientific">Mycobacterium tuberculosis (strain CDC 1551 / Oshkosh)</name>
    <dbReference type="NCBI Taxonomy" id="83331"/>
    <lineage>
        <taxon>Bacteria</taxon>
        <taxon>Bacillati</taxon>
        <taxon>Actinomycetota</taxon>
        <taxon>Actinomycetes</taxon>
        <taxon>Mycobacteriales</taxon>
        <taxon>Mycobacteriaceae</taxon>
        <taxon>Mycobacterium</taxon>
        <taxon>Mycobacterium tuberculosis complex</taxon>
    </lineage>
</organism>